<proteinExistence type="inferred from homology"/>
<accession>E9CV02</accession>
<sequence>MSARDNEKGSARSQPSHAAASEIENVPRPSRQQSWTGTMIKVFIICACAGIVSKYIIPLDSIFKSVHIDPHDYATRANRILSTTPLIDGHNDLPYLIRLETKNKIYDHEKLPFRTGLLSHTDQIKIQEGKLGGQFWSVFVECATDPNAEIDDPTWAVRDTLEQIDVTKRLVQEYPDLLEYCESASCAKAAFKRGKVGSFLGIEGGHQIGNSLASLRQVYDLGVRYITVTHNCDNAFATAASTVAVGKPDLGLTDFGREFVKEMNRLGMLVDLSHVSHQTMRDILSVTKAPVMFSHSSSYALSKHLRNVPDDVLNGVTKNGGVVMVTFVPSFLKVDDPASATIHDAVDHILHVAKVAGWDHVGIGSDFDGTADVPEGLENVSKYPRLIELLLERGVTDEQARKLIGENILRVWSNVEEIAENIRALGEKPNEETWSGRKWTAAIDIPMPFMFKDSADKRKEL</sequence>
<reference key="1">
    <citation type="submission" date="2010-03" db="EMBL/GenBank/DDBJ databases">
        <title>The genome sequence of Coccidioides posadasii strain Silveira.</title>
        <authorList>
            <consortium name="The Broad Institute Genome Sequencing Center for Infectious Disease"/>
            <person name="Neafsey D."/>
            <person name="Orbach M."/>
            <person name="Henn M.R."/>
            <person name="Cole G.T."/>
            <person name="Galgiani J."/>
            <person name="Gardner M.J."/>
            <person name="Kirkland T.N."/>
            <person name="Taylor J.W."/>
            <person name="Young S.K."/>
            <person name="Zeng Q."/>
            <person name="Koehrsen M."/>
            <person name="Alvarado L."/>
            <person name="Berlin A."/>
            <person name="Borenstein D."/>
            <person name="Chapman S.B."/>
            <person name="Chen Z."/>
            <person name="Engels R."/>
            <person name="Freedman E."/>
            <person name="Gellesch M."/>
            <person name="Goldberg J."/>
            <person name="Griggs A."/>
            <person name="Gujja S."/>
            <person name="Heilman E."/>
            <person name="Heiman D."/>
            <person name="Howarth C."/>
            <person name="Jen D."/>
            <person name="Larson L."/>
            <person name="Mehta T."/>
            <person name="Neiman D."/>
            <person name="Park D."/>
            <person name="Pearson M."/>
            <person name="Richards J."/>
            <person name="Roberts A."/>
            <person name="Saif S."/>
            <person name="Shea T."/>
            <person name="Shenoy N."/>
            <person name="Sisk P."/>
            <person name="Stolte C."/>
            <person name="Sykes S."/>
            <person name="Walk T."/>
            <person name="White J."/>
            <person name="Yandava C."/>
            <person name="Haas B."/>
            <person name="Nusbaum C."/>
            <person name="Birren B."/>
        </authorList>
    </citation>
    <scope>NUCLEOTIDE SEQUENCE [LARGE SCALE GENOMIC DNA]</scope>
    <source>
        <strain>RMSCC 757 / Silveira</strain>
    </source>
</reference>
<comment type="function">
    <text evidence="1">Hydrolyzes a wide range of dipeptides.</text>
</comment>
<comment type="catalytic activity">
    <reaction evidence="3">
        <text>an L-aminoacyl-L-amino acid + H2O = 2 an L-alpha-amino acid</text>
        <dbReference type="Rhea" id="RHEA:48940"/>
        <dbReference type="ChEBI" id="CHEBI:15377"/>
        <dbReference type="ChEBI" id="CHEBI:59869"/>
        <dbReference type="ChEBI" id="CHEBI:77460"/>
        <dbReference type="EC" id="3.4.13.19"/>
    </reaction>
</comment>
<comment type="cofactor">
    <cofactor evidence="3">
        <name>Zn(2+)</name>
        <dbReference type="ChEBI" id="CHEBI:29105"/>
    </cofactor>
</comment>
<comment type="subcellular location">
    <subcellularLocation>
        <location evidence="5">Membrane</location>
        <topology evidence="5">Single-pass membrane protein</topology>
    </subcellularLocation>
</comment>
<comment type="similarity">
    <text evidence="3">Belongs to the metallo-dependent hydrolases superfamily. Peptidase M19 family.</text>
</comment>
<protein>
    <recommendedName>
        <fullName>Putative dipeptidase CPSG_01350</fullName>
        <ecNumber evidence="3">3.4.13.19</ecNumber>
    </recommendedName>
</protein>
<keyword id="KW-0224">Dipeptidase</keyword>
<keyword id="KW-1015">Disulfide bond</keyword>
<keyword id="KW-0325">Glycoprotein</keyword>
<keyword id="KW-0378">Hydrolase</keyword>
<keyword id="KW-0472">Membrane</keyword>
<keyword id="KW-0479">Metal-binding</keyword>
<keyword id="KW-0482">Metalloprotease</keyword>
<keyword id="KW-0645">Protease</keyword>
<keyword id="KW-1185">Reference proteome</keyword>
<keyword id="KW-0812">Transmembrane</keyword>
<keyword id="KW-1133">Transmembrane helix</keyword>
<keyword id="KW-0862">Zinc</keyword>
<feature type="chain" id="PRO_0000411217" description="Putative dipeptidase CPSG_01350">
    <location>
        <begin position="1"/>
        <end position="461"/>
    </location>
</feature>
<feature type="transmembrane region" description="Helical" evidence="2">
    <location>
        <begin position="35"/>
        <end position="52"/>
    </location>
</feature>
<feature type="region of interest" description="Disordered" evidence="4">
    <location>
        <begin position="1"/>
        <end position="31"/>
    </location>
</feature>
<feature type="compositionally biased region" description="Basic and acidic residues" evidence="4">
    <location>
        <begin position="1"/>
        <end position="10"/>
    </location>
</feature>
<feature type="binding site" evidence="3">
    <location>
        <position position="90"/>
    </location>
    <ligand>
        <name>Zn(2+)</name>
        <dbReference type="ChEBI" id="CHEBI:29105"/>
        <label>1</label>
        <note>catalytic</note>
    </ligand>
</feature>
<feature type="binding site" evidence="3">
    <location>
        <position position="92"/>
    </location>
    <ligand>
        <name>Zn(2+)</name>
        <dbReference type="ChEBI" id="CHEBI:29105"/>
        <label>1</label>
        <note>catalytic</note>
    </ligand>
</feature>
<feature type="binding site" evidence="3">
    <location>
        <position position="203"/>
    </location>
    <ligand>
        <name>Zn(2+)</name>
        <dbReference type="ChEBI" id="CHEBI:29105"/>
        <label>1</label>
        <note>catalytic</note>
    </ligand>
</feature>
<feature type="binding site" evidence="3">
    <location>
        <position position="203"/>
    </location>
    <ligand>
        <name>Zn(2+)</name>
        <dbReference type="ChEBI" id="CHEBI:29105"/>
        <label>2</label>
        <note>catalytic</note>
    </ligand>
</feature>
<feature type="binding site" evidence="3">
    <location>
        <position position="230"/>
    </location>
    <ligand>
        <name>substrate</name>
    </ligand>
</feature>
<feature type="binding site" evidence="3">
    <location>
        <position position="274"/>
    </location>
    <ligand>
        <name>Zn(2+)</name>
        <dbReference type="ChEBI" id="CHEBI:29105"/>
        <label>2</label>
        <note>catalytic</note>
    </ligand>
</feature>
<feature type="binding site" evidence="3">
    <location>
        <position position="295"/>
    </location>
    <ligand>
        <name>Zn(2+)</name>
        <dbReference type="ChEBI" id="CHEBI:29105"/>
        <label>2</label>
        <note>catalytic</note>
    </ligand>
</feature>
<feature type="binding site" evidence="3">
    <location>
        <position position="306"/>
    </location>
    <ligand>
        <name>substrate</name>
    </ligand>
</feature>
<feature type="binding site" evidence="3">
    <location>
        <position position="366"/>
    </location>
    <ligand>
        <name>substrate</name>
    </ligand>
</feature>
<feature type="glycosylation site" description="N-linked (GlcNAc...) asparagine" evidence="2">
    <location>
        <position position="379"/>
    </location>
</feature>
<feature type="disulfide bond" evidence="3">
    <location>
        <begin position="142"/>
        <end position="232"/>
    </location>
</feature>
<gene>
    <name type="ORF">CPSG_01350</name>
</gene>
<dbReference type="EC" id="3.4.13.19" evidence="3"/>
<dbReference type="EMBL" id="GL636487">
    <property type="protein sequence ID" value="EFW21193.1"/>
    <property type="molecule type" value="Genomic_DNA"/>
</dbReference>
<dbReference type="SMR" id="E9CV02"/>
<dbReference type="VEuPathDB" id="FungiDB:CPSG_01350"/>
<dbReference type="VEuPathDB" id="FungiDB:D8B26_007407"/>
<dbReference type="eggNOG" id="KOG4127">
    <property type="taxonomic scope" value="Eukaryota"/>
</dbReference>
<dbReference type="HOGENOM" id="CLU_031404_4_2_1"/>
<dbReference type="OMA" id="HIWHVAQ"/>
<dbReference type="OrthoDB" id="27275at33183"/>
<dbReference type="Proteomes" id="UP000002497">
    <property type="component" value="Unassembled WGS sequence"/>
</dbReference>
<dbReference type="GO" id="GO:0016020">
    <property type="term" value="C:membrane"/>
    <property type="evidence" value="ECO:0007669"/>
    <property type="project" value="UniProtKB-SubCell"/>
</dbReference>
<dbReference type="GO" id="GO:0046872">
    <property type="term" value="F:metal ion binding"/>
    <property type="evidence" value="ECO:0007669"/>
    <property type="project" value="UniProtKB-KW"/>
</dbReference>
<dbReference type="GO" id="GO:0070573">
    <property type="term" value="F:metallodipeptidase activity"/>
    <property type="evidence" value="ECO:0007669"/>
    <property type="project" value="InterPro"/>
</dbReference>
<dbReference type="GO" id="GO:0006508">
    <property type="term" value="P:proteolysis"/>
    <property type="evidence" value="ECO:0007669"/>
    <property type="project" value="UniProtKB-KW"/>
</dbReference>
<dbReference type="CDD" id="cd01301">
    <property type="entry name" value="rDP_like"/>
    <property type="match status" value="1"/>
</dbReference>
<dbReference type="Gene3D" id="3.20.20.140">
    <property type="entry name" value="Metal-dependent hydrolases"/>
    <property type="match status" value="1"/>
</dbReference>
<dbReference type="InterPro" id="IPR000180">
    <property type="entry name" value="Dipep_AS"/>
</dbReference>
<dbReference type="InterPro" id="IPR032466">
    <property type="entry name" value="Metal_Hydrolase"/>
</dbReference>
<dbReference type="InterPro" id="IPR008257">
    <property type="entry name" value="Pept_M19"/>
</dbReference>
<dbReference type="PANTHER" id="PTHR10443:SF12">
    <property type="entry name" value="DIPEPTIDASE"/>
    <property type="match status" value="1"/>
</dbReference>
<dbReference type="PANTHER" id="PTHR10443">
    <property type="entry name" value="MICROSOMAL DIPEPTIDASE"/>
    <property type="match status" value="1"/>
</dbReference>
<dbReference type="Pfam" id="PF01244">
    <property type="entry name" value="Peptidase_M19"/>
    <property type="match status" value="1"/>
</dbReference>
<dbReference type="SUPFAM" id="SSF51556">
    <property type="entry name" value="Metallo-dependent hydrolases"/>
    <property type="match status" value="1"/>
</dbReference>
<dbReference type="PROSITE" id="PS00869">
    <property type="entry name" value="RENAL_DIPEPTIDASE_1"/>
    <property type="match status" value="1"/>
</dbReference>
<dbReference type="PROSITE" id="PS51365">
    <property type="entry name" value="RENAL_DIPEPTIDASE_2"/>
    <property type="match status" value="1"/>
</dbReference>
<organism>
    <name type="scientific">Coccidioides posadasii (strain RMSCC 757 / Silveira)</name>
    <name type="common">Valley fever fungus</name>
    <dbReference type="NCBI Taxonomy" id="443226"/>
    <lineage>
        <taxon>Eukaryota</taxon>
        <taxon>Fungi</taxon>
        <taxon>Dikarya</taxon>
        <taxon>Ascomycota</taxon>
        <taxon>Pezizomycotina</taxon>
        <taxon>Eurotiomycetes</taxon>
        <taxon>Eurotiomycetidae</taxon>
        <taxon>Onygenales</taxon>
        <taxon>Onygenaceae</taxon>
        <taxon>Coccidioides</taxon>
    </lineage>
</organism>
<name>DPEP2_COCPS</name>
<evidence type="ECO:0000250" key="1"/>
<evidence type="ECO:0000255" key="2"/>
<evidence type="ECO:0000255" key="3">
    <source>
        <dbReference type="PROSITE-ProRule" id="PRU10073"/>
    </source>
</evidence>
<evidence type="ECO:0000256" key="4">
    <source>
        <dbReference type="SAM" id="MobiDB-lite"/>
    </source>
</evidence>
<evidence type="ECO:0000305" key="5"/>